<name>RIMP_STRZT</name>
<proteinExistence type="inferred from homology"/>
<dbReference type="EMBL" id="CP000921">
    <property type="protein sequence ID" value="ACO23079.1"/>
    <property type="molecule type" value="Genomic_DNA"/>
</dbReference>
<dbReference type="RefSeq" id="WP_001808916.1">
    <property type="nucleotide sequence ID" value="NC_012469.1"/>
</dbReference>
<dbReference type="SMR" id="C1CQ44"/>
<dbReference type="KEGG" id="snt:SPT_0582"/>
<dbReference type="HOGENOM" id="CLU_070525_2_0_9"/>
<dbReference type="GO" id="GO:0005829">
    <property type="term" value="C:cytosol"/>
    <property type="evidence" value="ECO:0007669"/>
    <property type="project" value="TreeGrafter"/>
</dbReference>
<dbReference type="GO" id="GO:0000028">
    <property type="term" value="P:ribosomal small subunit assembly"/>
    <property type="evidence" value="ECO:0007669"/>
    <property type="project" value="TreeGrafter"/>
</dbReference>
<dbReference type="GO" id="GO:0006412">
    <property type="term" value="P:translation"/>
    <property type="evidence" value="ECO:0007669"/>
    <property type="project" value="TreeGrafter"/>
</dbReference>
<dbReference type="CDD" id="cd01734">
    <property type="entry name" value="YlxS_C"/>
    <property type="match status" value="1"/>
</dbReference>
<dbReference type="Gene3D" id="2.30.30.180">
    <property type="entry name" value="Ribosome maturation factor RimP, C-terminal domain"/>
    <property type="match status" value="1"/>
</dbReference>
<dbReference type="Gene3D" id="3.30.300.70">
    <property type="entry name" value="RimP-like superfamily, N-terminal"/>
    <property type="match status" value="1"/>
</dbReference>
<dbReference type="HAMAP" id="MF_01077">
    <property type="entry name" value="RimP"/>
    <property type="match status" value="1"/>
</dbReference>
<dbReference type="InterPro" id="IPR003728">
    <property type="entry name" value="Ribosome_maturation_RimP"/>
</dbReference>
<dbReference type="InterPro" id="IPR028998">
    <property type="entry name" value="RimP_C"/>
</dbReference>
<dbReference type="InterPro" id="IPR036847">
    <property type="entry name" value="RimP_C_sf"/>
</dbReference>
<dbReference type="InterPro" id="IPR028989">
    <property type="entry name" value="RimP_N"/>
</dbReference>
<dbReference type="InterPro" id="IPR035956">
    <property type="entry name" value="RimP_N_sf"/>
</dbReference>
<dbReference type="NCBIfam" id="NF000928">
    <property type="entry name" value="PRK00092.1-2"/>
    <property type="match status" value="1"/>
</dbReference>
<dbReference type="PANTHER" id="PTHR33867">
    <property type="entry name" value="RIBOSOME MATURATION FACTOR RIMP"/>
    <property type="match status" value="1"/>
</dbReference>
<dbReference type="PANTHER" id="PTHR33867:SF1">
    <property type="entry name" value="RIBOSOME MATURATION FACTOR RIMP"/>
    <property type="match status" value="1"/>
</dbReference>
<dbReference type="Pfam" id="PF17384">
    <property type="entry name" value="DUF150_C"/>
    <property type="match status" value="1"/>
</dbReference>
<dbReference type="Pfam" id="PF02576">
    <property type="entry name" value="RimP_N"/>
    <property type="match status" value="1"/>
</dbReference>
<dbReference type="SUPFAM" id="SSF74942">
    <property type="entry name" value="YhbC-like, C-terminal domain"/>
    <property type="match status" value="1"/>
</dbReference>
<dbReference type="SUPFAM" id="SSF75420">
    <property type="entry name" value="YhbC-like, N-terminal domain"/>
    <property type="match status" value="1"/>
</dbReference>
<comment type="function">
    <text evidence="1">Required for maturation of 30S ribosomal subunits.</text>
</comment>
<comment type="subcellular location">
    <subcellularLocation>
        <location evidence="1">Cytoplasm</location>
    </subcellularLocation>
</comment>
<comment type="similarity">
    <text evidence="1">Belongs to the RimP family.</text>
</comment>
<protein>
    <recommendedName>
        <fullName evidence="1">Ribosome maturation factor RimP</fullName>
    </recommendedName>
</protein>
<reference key="1">
    <citation type="journal article" date="2010" name="Genome Biol.">
        <title>Structure and dynamics of the pan-genome of Streptococcus pneumoniae and closely related species.</title>
        <authorList>
            <person name="Donati C."/>
            <person name="Hiller N.L."/>
            <person name="Tettelin H."/>
            <person name="Muzzi A."/>
            <person name="Croucher N.J."/>
            <person name="Angiuoli S.V."/>
            <person name="Oggioni M."/>
            <person name="Dunning Hotopp J.C."/>
            <person name="Hu F.Z."/>
            <person name="Riley D.R."/>
            <person name="Covacci A."/>
            <person name="Mitchell T.J."/>
            <person name="Bentley S.D."/>
            <person name="Kilian M."/>
            <person name="Ehrlich G.D."/>
            <person name="Rappuoli R."/>
            <person name="Moxon E.R."/>
            <person name="Masignani V."/>
        </authorList>
    </citation>
    <scope>NUCLEOTIDE SEQUENCE [LARGE SCALE GENOMIC DNA]</scope>
    <source>
        <strain>Taiwan19F-14</strain>
    </source>
</reference>
<feature type="chain" id="PRO_1000149809" description="Ribosome maturation factor RimP">
    <location>
        <begin position="1"/>
        <end position="159"/>
    </location>
</feature>
<evidence type="ECO:0000255" key="1">
    <source>
        <dbReference type="HAMAP-Rule" id="MF_01077"/>
    </source>
</evidence>
<sequence length="159" mass="17764">MDAIATIVELVREVVEPVIEAPFELVDIEYGKIGSDMILSIFVDKPEGITLNDTADLTEMISPVLDTIKPDPFPEQYFLEITSPGLERPLKTKDAVAGAVGKYIHVGLYQAIDKQKVFEGTLLAFEEDELTMEYMDKTRKKTVQIPYSLVSKARLAVKL</sequence>
<organism>
    <name type="scientific">Streptococcus pneumoniae (strain Taiwan19F-14)</name>
    <dbReference type="NCBI Taxonomy" id="487213"/>
    <lineage>
        <taxon>Bacteria</taxon>
        <taxon>Bacillati</taxon>
        <taxon>Bacillota</taxon>
        <taxon>Bacilli</taxon>
        <taxon>Lactobacillales</taxon>
        <taxon>Streptococcaceae</taxon>
        <taxon>Streptococcus</taxon>
    </lineage>
</organism>
<accession>C1CQ44</accession>
<gene>
    <name evidence="1" type="primary">rimP</name>
    <name type="ordered locus">SPT_0582</name>
</gene>
<keyword id="KW-0963">Cytoplasm</keyword>
<keyword id="KW-0690">Ribosome biogenesis</keyword>